<keyword id="KW-0030">Aminoacyl-tRNA synthetase</keyword>
<keyword id="KW-0067">ATP-binding</keyword>
<keyword id="KW-0963">Cytoplasm</keyword>
<keyword id="KW-0436">Ligase</keyword>
<keyword id="KW-0479">Metal-binding</keyword>
<keyword id="KW-0547">Nucleotide-binding</keyword>
<keyword id="KW-0648">Protein biosynthesis</keyword>
<keyword id="KW-1185">Reference proteome</keyword>
<keyword id="KW-0862">Zinc</keyword>
<evidence type="ECO:0000255" key="1">
    <source>
        <dbReference type="HAMAP-Rule" id="MF_00041"/>
    </source>
</evidence>
<dbReference type="EC" id="6.1.1.16" evidence="1"/>
<dbReference type="EMBL" id="CP000682">
    <property type="protein sequence ID" value="ABP96217.1"/>
    <property type="molecule type" value="Genomic_DNA"/>
</dbReference>
<dbReference type="RefSeq" id="WP_012022004.1">
    <property type="nucleotide sequence ID" value="NC_009440.1"/>
</dbReference>
<dbReference type="SMR" id="A4YIG5"/>
<dbReference type="STRING" id="399549.Msed_2077"/>
<dbReference type="GeneID" id="91756613"/>
<dbReference type="KEGG" id="mse:Msed_2077"/>
<dbReference type="eggNOG" id="arCOG00486">
    <property type="taxonomic scope" value="Archaea"/>
</dbReference>
<dbReference type="HOGENOM" id="CLU_013528_0_1_2"/>
<dbReference type="Proteomes" id="UP000000242">
    <property type="component" value="Chromosome"/>
</dbReference>
<dbReference type="GO" id="GO:0005737">
    <property type="term" value="C:cytoplasm"/>
    <property type="evidence" value="ECO:0007669"/>
    <property type="project" value="UniProtKB-SubCell"/>
</dbReference>
<dbReference type="GO" id="GO:0005524">
    <property type="term" value="F:ATP binding"/>
    <property type="evidence" value="ECO:0007669"/>
    <property type="project" value="UniProtKB-UniRule"/>
</dbReference>
<dbReference type="GO" id="GO:0004817">
    <property type="term" value="F:cysteine-tRNA ligase activity"/>
    <property type="evidence" value="ECO:0007669"/>
    <property type="project" value="UniProtKB-UniRule"/>
</dbReference>
<dbReference type="GO" id="GO:0008270">
    <property type="term" value="F:zinc ion binding"/>
    <property type="evidence" value="ECO:0007669"/>
    <property type="project" value="UniProtKB-UniRule"/>
</dbReference>
<dbReference type="GO" id="GO:0006423">
    <property type="term" value="P:cysteinyl-tRNA aminoacylation"/>
    <property type="evidence" value="ECO:0007669"/>
    <property type="project" value="UniProtKB-UniRule"/>
</dbReference>
<dbReference type="CDD" id="cd00672">
    <property type="entry name" value="CysRS_core"/>
    <property type="match status" value="1"/>
</dbReference>
<dbReference type="FunFam" id="3.40.50.620:FF:000068">
    <property type="entry name" value="Cysteine--tRNA ligase"/>
    <property type="match status" value="1"/>
</dbReference>
<dbReference type="Gene3D" id="1.20.120.1910">
    <property type="entry name" value="Cysteine-tRNA ligase, C-terminal anti-codon recognition domain"/>
    <property type="match status" value="1"/>
</dbReference>
<dbReference type="Gene3D" id="3.40.50.620">
    <property type="entry name" value="HUPs"/>
    <property type="match status" value="1"/>
</dbReference>
<dbReference type="HAMAP" id="MF_00041">
    <property type="entry name" value="Cys_tRNA_synth"/>
    <property type="match status" value="1"/>
</dbReference>
<dbReference type="InterPro" id="IPR015803">
    <property type="entry name" value="Cys-tRNA-ligase"/>
</dbReference>
<dbReference type="InterPro" id="IPR015273">
    <property type="entry name" value="Cys-tRNA-synt_Ia_DALR"/>
</dbReference>
<dbReference type="InterPro" id="IPR024909">
    <property type="entry name" value="Cys-tRNA/MSH_ligase"/>
</dbReference>
<dbReference type="InterPro" id="IPR014729">
    <property type="entry name" value="Rossmann-like_a/b/a_fold"/>
</dbReference>
<dbReference type="InterPro" id="IPR032678">
    <property type="entry name" value="tRNA-synt_1_cat_dom"/>
</dbReference>
<dbReference type="InterPro" id="IPR009080">
    <property type="entry name" value="tRNAsynth_Ia_anticodon-bd"/>
</dbReference>
<dbReference type="NCBIfam" id="TIGR00435">
    <property type="entry name" value="cysS"/>
    <property type="match status" value="1"/>
</dbReference>
<dbReference type="PANTHER" id="PTHR10890:SF3">
    <property type="entry name" value="CYSTEINE--TRNA LIGASE, CYTOPLASMIC"/>
    <property type="match status" value="1"/>
</dbReference>
<dbReference type="PANTHER" id="PTHR10890">
    <property type="entry name" value="CYSTEINYL-TRNA SYNTHETASE"/>
    <property type="match status" value="1"/>
</dbReference>
<dbReference type="Pfam" id="PF01406">
    <property type="entry name" value="tRNA-synt_1e"/>
    <property type="match status" value="1"/>
</dbReference>
<dbReference type="PRINTS" id="PR00983">
    <property type="entry name" value="TRNASYNTHCYS"/>
</dbReference>
<dbReference type="SMART" id="SM00840">
    <property type="entry name" value="DALR_2"/>
    <property type="match status" value="1"/>
</dbReference>
<dbReference type="SUPFAM" id="SSF47323">
    <property type="entry name" value="Anticodon-binding domain of a subclass of class I aminoacyl-tRNA synthetases"/>
    <property type="match status" value="1"/>
</dbReference>
<dbReference type="SUPFAM" id="SSF52374">
    <property type="entry name" value="Nucleotidylyl transferase"/>
    <property type="match status" value="1"/>
</dbReference>
<comment type="catalytic activity">
    <reaction evidence="1">
        <text>tRNA(Cys) + L-cysteine + ATP = L-cysteinyl-tRNA(Cys) + AMP + diphosphate</text>
        <dbReference type="Rhea" id="RHEA:17773"/>
        <dbReference type="Rhea" id="RHEA-COMP:9661"/>
        <dbReference type="Rhea" id="RHEA-COMP:9679"/>
        <dbReference type="ChEBI" id="CHEBI:30616"/>
        <dbReference type="ChEBI" id="CHEBI:33019"/>
        <dbReference type="ChEBI" id="CHEBI:35235"/>
        <dbReference type="ChEBI" id="CHEBI:78442"/>
        <dbReference type="ChEBI" id="CHEBI:78517"/>
        <dbReference type="ChEBI" id="CHEBI:456215"/>
        <dbReference type="EC" id="6.1.1.16"/>
    </reaction>
</comment>
<comment type="cofactor">
    <cofactor evidence="1">
        <name>Zn(2+)</name>
        <dbReference type="ChEBI" id="CHEBI:29105"/>
    </cofactor>
    <text evidence="1">Binds 1 zinc ion per subunit.</text>
</comment>
<comment type="subcellular location">
    <subcellularLocation>
        <location evidence="1">Cytoplasm</location>
    </subcellularLocation>
</comment>
<comment type="similarity">
    <text evidence="1">Belongs to the class-I aminoacyl-tRNA synthetase family.</text>
</comment>
<gene>
    <name evidence="1" type="primary">cysS</name>
    <name type="ordered locus">Msed_2077</name>
</gene>
<name>SYC_METS5</name>
<sequence>MQVFNTLGKRLQSFEPHEPNTVKMYVCGPTVYDEVHIGHGRTFVAFDAMSRYLRVKGYNVVRVQNITDIDDKIINKARELGKSWNEVSEYYSKSYLEHIGALKVKIDMHPKVTTHIKEIIDFVQRLIDSGHAYVANGSVYFDVDTYPGYGELSNVKKEEWDQGEEIVKEKRHPYDFALWKAYKPGEPYWESPWGKGRPGWHIECSTMSTRYLGTKIDIHGGGMDLVFPHHENERAQTESLTGSTWVKYWMHVAFLTIRKEKMSKSKGNIVPLKEALSKYGPSTLRYWFLSSQYRNPIEYSEEILEQSSRSLQRLKDAISVLRKIIQKGPAHYAKEEDVKVQEEIVRAISRFDEHMENDFDTSNALTSIHEIASIVFSKLQYSEDVFGALIALDGFRKFNEVFAVMDEEFSAELDRLTKVIDAVIEVRNYLRKKQMYDLSDQIRDILSRSGVKILDSKEGSTWRFQ</sequence>
<reference key="1">
    <citation type="journal article" date="2008" name="Appl. Environ. Microbiol.">
        <title>The genome sequence of the metal-mobilizing, extremely thermoacidophilic archaeon Metallosphaera sedula provides insights into bioleaching-associated metabolism.</title>
        <authorList>
            <person name="Auernik K.S."/>
            <person name="Maezato Y."/>
            <person name="Blum P.H."/>
            <person name="Kelly R.M."/>
        </authorList>
    </citation>
    <scope>NUCLEOTIDE SEQUENCE [LARGE SCALE GENOMIC DNA]</scope>
    <source>
        <strain>ATCC 51363 / DSM 5348 / JCM 9185 / NBRC 15509 / TH2</strain>
    </source>
</reference>
<feature type="chain" id="PRO_0000332920" description="Cysteine--tRNA ligase">
    <location>
        <begin position="1"/>
        <end position="465"/>
    </location>
</feature>
<feature type="short sequence motif" description="'HIGH' region">
    <location>
        <begin position="29"/>
        <end position="39"/>
    </location>
</feature>
<feature type="short sequence motif" description="'KMSKS' region">
    <location>
        <begin position="261"/>
        <end position="265"/>
    </location>
</feature>
<feature type="binding site" evidence="1">
    <location>
        <position position="27"/>
    </location>
    <ligand>
        <name>Zn(2+)</name>
        <dbReference type="ChEBI" id="CHEBI:29105"/>
    </ligand>
</feature>
<feature type="binding site" evidence="1">
    <location>
        <position position="204"/>
    </location>
    <ligand>
        <name>Zn(2+)</name>
        <dbReference type="ChEBI" id="CHEBI:29105"/>
    </ligand>
</feature>
<feature type="binding site" evidence="1">
    <location>
        <position position="229"/>
    </location>
    <ligand>
        <name>Zn(2+)</name>
        <dbReference type="ChEBI" id="CHEBI:29105"/>
    </ligand>
</feature>
<feature type="binding site" evidence="1">
    <location>
        <position position="233"/>
    </location>
    <ligand>
        <name>Zn(2+)</name>
        <dbReference type="ChEBI" id="CHEBI:29105"/>
    </ligand>
</feature>
<feature type="binding site" evidence="1">
    <location>
        <position position="264"/>
    </location>
    <ligand>
        <name>ATP</name>
        <dbReference type="ChEBI" id="CHEBI:30616"/>
    </ligand>
</feature>
<protein>
    <recommendedName>
        <fullName evidence="1">Cysteine--tRNA ligase</fullName>
        <ecNumber evidence="1">6.1.1.16</ecNumber>
    </recommendedName>
    <alternativeName>
        <fullName evidence="1">Cysteinyl-tRNA synthetase</fullName>
        <shortName evidence="1">CysRS</shortName>
    </alternativeName>
</protein>
<organism>
    <name type="scientific">Metallosphaera sedula (strain ATCC 51363 / DSM 5348 / JCM 9185 / NBRC 15509 / TH2)</name>
    <dbReference type="NCBI Taxonomy" id="399549"/>
    <lineage>
        <taxon>Archaea</taxon>
        <taxon>Thermoproteota</taxon>
        <taxon>Thermoprotei</taxon>
        <taxon>Sulfolobales</taxon>
        <taxon>Sulfolobaceae</taxon>
        <taxon>Metallosphaera</taxon>
    </lineage>
</organism>
<accession>A4YIG5</accession>
<proteinExistence type="inferred from homology"/>